<evidence type="ECO:0000269" key="1">
    <source>
    </source>
</evidence>
<evidence type="ECO:0000269" key="2">
    <source>
    </source>
</evidence>
<evidence type="ECO:0000269" key="3">
    <source>
    </source>
</evidence>
<evidence type="ECO:0000305" key="4"/>
<accession>Q47157</accession>
<sequence length="132" mass="15488">MRVFKTKLIRLQLTAEELDALTADFISYKRDGVLPDIFGRDALYDDSFTWPLIKFERVAHIHLANENNPFPPQLRQFSRTNDEAHLVYCQGAFDEQAWLLIAILKPEPHKLARDNNQMHKIGKMAEAFRMRF</sequence>
<dbReference type="EC" id="3.1.-.-"/>
<dbReference type="EMBL" id="D38582">
    <property type="protein sequence ID" value="BAA07595.1"/>
    <property type="molecule type" value="Genomic_DNA"/>
</dbReference>
<dbReference type="EMBL" id="U70214">
    <property type="protein sequence ID" value="AAB08653.1"/>
    <property type="molecule type" value="Genomic_DNA"/>
</dbReference>
<dbReference type="EMBL" id="U00096">
    <property type="protein sequence ID" value="AAC73337.1"/>
    <property type="molecule type" value="Genomic_DNA"/>
</dbReference>
<dbReference type="EMBL" id="AP009048">
    <property type="protein sequence ID" value="BAA77902.1"/>
    <property type="molecule type" value="Genomic_DNA"/>
</dbReference>
<dbReference type="PIR" id="B64748">
    <property type="entry name" value="B64748"/>
</dbReference>
<dbReference type="RefSeq" id="NP_414768.1">
    <property type="nucleotide sequence ID" value="NC_000913.3"/>
</dbReference>
<dbReference type="RefSeq" id="WP_001263489.1">
    <property type="nucleotide sequence ID" value="NZ_SSZK01000050.1"/>
</dbReference>
<dbReference type="BioGRID" id="4259763">
    <property type="interactions" value="139"/>
</dbReference>
<dbReference type="ComplexPortal" id="CPX-6026">
    <property type="entry name" value="YafNO toxin-antitoxin complex"/>
</dbReference>
<dbReference type="FunCoup" id="Q47157">
    <property type="interactions" value="127"/>
</dbReference>
<dbReference type="IntAct" id="Q47157">
    <property type="interactions" value="7"/>
</dbReference>
<dbReference type="STRING" id="511145.b0233"/>
<dbReference type="PaxDb" id="511145-b0233"/>
<dbReference type="DNASU" id="944916"/>
<dbReference type="EnsemblBacteria" id="AAC73337">
    <property type="protein sequence ID" value="AAC73337"/>
    <property type="gene ID" value="b0233"/>
</dbReference>
<dbReference type="GeneID" id="944916"/>
<dbReference type="KEGG" id="ecj:JW0223"/>
<dbReference type="KEGG" id="eco:b0233"/>
<dbReference type="KEGG" id="ecoc:C3026_01105"/>
<dbReference type="KEGG" id="ecoc:C3026_23845"/>
<dbReference type="PATRIC" id="fig|1411691.4.peg.2050"/>
<dbReference type="EchoBASE" id="EB2946"/>
<dbReference type="eggNOG" id="ENOG502ZEGB">
    <property type="taxonomic scope" value="Bacteria"/>
</dbReference>
<dbReference type="HOGENOM" id="CLU_148663_2_0_6"/>
<dbReference type="InParanoid" id="Q47157"/>
<dbReference type="OMA" id="IAIIKHW"/>
<dbReference type="OrthoDB" id="6195342at2"/>
<dbReference type="BioCyc" id="EcoCyc:G6117-MONOMER"/>
<dbReference type="BioCyc" id="MetaCyc:G6117-MONOMER"/>
<dbReference type="PRO" id="PR:Q47157"/>
<dbReference type="Proteomes" id="UP000000625">
    <property type="component" value="Chromosome"/>
</dbReference>
<dbReference type="GO" id="GO:0110001">
    <property type="term" value="C:toxin-antitoxin complex"/>
    <property type="evidence" value="ECO:0000353"/>
    <property type="project" value="ComplexPortal"/>
</dbReference>
<dbReference type="GO" id="GO:0043023">
    <property type="term" value="F:ribosomal large subunit binding"/>
    <property type="evidence" value="ECO:0000314"/>
    <property type="project" value="EcoCyc"/>
</dbReference>
<dbReference type="GO" id="GO:0003723">
    <property type="term" value="F:RNA binding"/>
    <property type="evidence" value="ECO:0007669"/>
    <property type="project" value="UniProtKB-KW"/>
</dbReference>
<dbReference type="GO" id="GO:0004521">
    <property type="term" value="F:RNA endonuclease activity"/>
    <property type="evidence" value="ECO:0000314"/>
    <property type="project" value="UniProtKB"/>
</dbReference>
<dbReference type="GO" id="GO:0006281">
    <property type="term" value="P:DNA repair"/>
    <property type="evidence" value="ECO:0007669"/>
    <property type="project" value="UniProtKB-KW"/>
</dbReference>
<dbReference type="GO" id="GO:0017148">
    <property type="term" value="P:negative regulation of translation"/>
    <property type="evidence" value="ECO:0000314"/>
    <property type="project" value="EcoCyc"/>
</dbReference>
<dbReference type="GO" id="GO:0006355">
    <property type="term" value="P:regulation of DNA-templated transcription"/>
    <property type="evidence" value="ECO:0000303"/>
    <property type="project" value="ComplexPortal"/>
</dbReference>
<dbReference type="GO" id="GO:0040008">
    <property type="term" value="P:regulation of growth"/>
    <property type="evidence" value="ECO:0000303"/>
    <property type="project" value="ComplexPortal"/>
</dbReference>
<dbReference type="GO" id="GO:0009432">
    <property type="term" value="P:SOS response"/>
    <property type="evidence" value="ECO:0000303"/>
    <property type="project" value="ComplexPortal"/>
</dbReference>
<dbReference type="InterPro" id="IPR020353">
    <property type="entry name" value="Toxin_YafO"/>
</dbReference>
<dbReference type="NCBIfam" id="NF007377">
    <property type="entry name" value="PRK09885.1"/>
    <property type="match status" value="1"/>
</dbReference>
<dbReference type="Pfam" id="PF13957">
    <property type="entry name" value="YafO_toxin"/>
    <property type="match status" value="1"/>
</dbReference>
<comment type="function">
    <text evidence="2 3">Toxic component of a type II toxin-antitoxin (TA) system. A translation-dependent mRNA interferase. Overexpression causes cessation of cell growth and inhibits cell proliferation via inhibition of translation; this blockage is overcome by subsequent expression of antitoxin YafN. Overexpression causes cleavage of a number of mRNAs in a ribosome-dependent fashion. YafO binding to the 50S ribosomal subunit in the translation complex induces mRNA cleavage 3' to the region protected by the ribosome; YafO alone is not able to digest mRNA.</text>
</comment>
<comment type="subunit">
    <text evidence="4">Probably forms a complex with the antitoxin YafN which inhibits the mRNA interferase activity.</text>
</comment>
<comment type="interaction">
    <interactant intactId="EBI-1119355">
        <id>Q47157</id>
    </interactant>
    <interactant intactId="EBI-1114856">
        <id>Q47156</id>
        <label>yafN</label>
    </interactant>
    <organismsDiffer>false</organismsDiffer>
    <experiments>2</experiments>
</comment>
<comment type="induction">
    <text evidence="1 3">Induced by amino acid starvation, glucose starvation, the DNA cross-linker mitomycin C (SOS response) and when translation is blocked. Induction is decreased in the absence of the Lon protease suggesting, by homology to other toxin-antitoxin systems, that Lon may degrade the YafN antitoxin. Transcription is negatively regulated by the cognate locus, probably by YafN. A member of the dinB-yafNOP operon; it has 2 promoters, 1 upstream of dinB and 1 specific for yafN-yfaO.</text>
</comment>
<reference key="1">
    <citation type="submission" date="1995-10" db="EMBL/GenBank/DDBJ databases">
        <authorList>
            <person name="Ohmori H."/>
        </authorList>
    </citation>
    <scope>NUCLEOTIDE SEQUENCE [GENOMIC DNA]</scope>
    <source>
        <strain>K12 / W3110 / ATCC 27325 / DSM 5911</strain>
    </source>
</reference>
<reference key="2">
    <citation type="submission" date="1996-02" db="EMBL/GenBank/DDBJ databases">
        <title>Systematic sequencing of the Escherichia coli genome: analysis of the 4.0 - 6.0 min (189,987 - 281,416bp) region.</title>
        <authorList>
            <person name="Takemoto K."/>
            <person name="Mori H."/>
            <person name="Murayama N."/>
            <person name="Kataoka K."/>
            <person name="Yano M."/>
            <person name="Itoh T."/>
            <person name="Yamamoto Y."/>
            <person name="Inokuchi H."/>
            <person name="Miki T."/>
            <person name="Hatada E."/>
            <person name="Fukuda R."/>
            <person name="Ichihara S."/>
            <person name="Mizuno T."/>
            <person name="Makino K."/>
            <person name="Nakata A."/>
            <person name="Yura T."/>
            <person name="Sampei G."/>
            <person name="Mizobuchi K."/>
        </authorList>
    </citation>
    <scope>NUCLEOTIDE SEQUENCE [LARGE SCALE GENOMIC DNA]</scope>
    <source>
        <strain>K12 / W3110 / ATCC 27325 / DSM 5911</strain>
    </source>
</reference>
<reference key="3">
    <citation type="submission" date="1997-01" db="EMBL/GenBank/DDBJ databases">
        <title>Sequence of minutes 4-25 of Escherichia coli.</title>
        <authorList>
            <person name="Chung E."/>
            <person name="Allen E."/>
            <person name="Araujo R."/>
            <person name="Aparicio A.M."/>
            <person name="Davis K."/>
            <person name="Duncan M."/>
            <person name="Federspiel N."/>
            <person name="Hyman R."/>
            <person name="Kalman S."/>
            <person name="Komp C."/>
            <person name="Kurdi O."/>
            <person name="Lew H."/>
            <person name="Lin D."/>
            <person name="Namath A."/>
            <person name="Oefner P."/>
            <person name="Roberts D."/>
            <person name="Schramm S."/>
            <person name="Davis R.W."/>
        </authorList>
    </citation>
    <scope>NUCLEOTIDE SEQUENCE [LARGE SCALE GENOMIC DNA]</scope>
    <source>
        <strain>K12 / MG1655 / ATCC 47076</strain>
    </source>
</reference>
<reference key="4">
    <citation type="journal article" date="1997" name="Science">
        <title>The complete genome sequence of Escherichia coli K-12.</title>
        <authorList>
            <person name="Blattner F.R."/>
            <person name="Plunkett G. III"/>
            <person name="Bloch C.A."/>
            <person name="Perna N.T."/>
            <person name="Burland V."/>
            <person name="Riley M."/>
            <person name="Collado-Vides J."/>
            <person name="Glasner J.D."/>
            <person name="Rode C.K."/>
            <person name="Mayhew G.F."/>
            <person name="Gregor J."/>
            <person name="Davis N.W."/>
            <person name="Kirkpatrick H.A."/>
            <person name="Goeden M.A."/>
            <person name="Rose D.J."/>
            <person name="Mau B."/>
            <person name="Shao Y."/>
        </authorList>
    </citation>
    <scope>NUCLEOTIDE SEQUENCE [LARGE SCALE GENOMIC DNA]</scope>
    <source>
        <strain>K12 / MG1655 / ATCC 47076</strain>
    </source>
</reference>
<reference key="5">
    <citation type="journal article" date="2006" name="Mol. Syst. Biol.">
        <title>Highly accurate genome sequences of Escherichia coli K-12 strains MG1655 and W3110.</title>
        <authorList>
            <person name="Hayashi K."/>
            <person name="Morooka N."/>
            <person name="Yamamoto Y."/>
            <person name="Fujita K."/>
            <person name="Isono K."/>
            <person name="Choi S."/>
            <person name="Ohtsubo E."/>
            <person name="Baba T."/>
            <person name="Wanner B.L."/>
            <person name="Mori H."/>
            <person name="Horiuchi T."/>
        </authorList>
    </citation>
    <scope>NUCLEOTIDE SEQUENCE [LARGE SCALE GENOMIC DNA]</scope>
    <source>
        <strain>K12 / W3110 / ATCC 27325 / DSM 5911</strain>
    </source>
</reference>
<reference key="6">
    <citation type="journal article" date="2003" name="J. Bacteriol.">
        <title>The dinB operon and spontaneous mutation in Escherichia coli.</title>
        <authorList>
            <person name="McKenzie G.J."/>
            <person name="Magner D.B."/>
            <person name="Lee P.L."/>
            <person name="Rosenberg S.M."/>
        </authorList>
    </citation>
    <scope>INDUCTION</scope>
    <scope>OPERON STRUCTURE</scope>
    <source>
        <strain>K12 / MG1655 / ATCC 47076</strain>
    </source>
</reference>
<reference key="7">
    <citation type="journal article" date="2009" name="J. Biol. Chem.">
        <title>Characterization of YafO, an Escherichia coli toxin.</title>
        <authorList>
            <person name="Zhang Y."/>
            <person name="Yamaguchi Y."/>
            <person name="Inouye M."/>
        </authorList>
    </citation>
    <scope>FUNCTION AS AN MRNA INTERFERASE</scope>
    <scope>LARGE RIBOSOMAL SUBUNIT-BINDING</scope>
    <source>
        <strain>K12 / BW25113</strain>
    </source>
</reference>
<reference key="8">
    <citation type="journal article" date="2010" name="Mol. Microbiol.">
        <title>Three new RelE-homologous mRNA interferases of Escherichia coli differentially induced by environmental stresses.</title>
        <authorList>
            <person name="Christensen-Dalsgaard M."/>
            <person name="Jorgensen M.G."/>
            <person name="Gerdes K."/>
        </authorList>
    </citation>
    <scope>FUNCTION AS AN MRNA INTERFERASE</scope>
    <scope>INDUCTION</scope>
    <scope>OPERON STRUCTURE</scope>
    <source>
        <strain>K12 / MG1655 / ATCC 47076</strain>
    </source>
</reference>
<reference key="9">
    <citation type="journal article" date="2011" name="Proc. Natl. Acad. Sci. U.S.A.">
        <title>Bacterial persistence by RNA endonucleases.</title>
        <authorList>
            <person name="Maisonneuve E."/>
            <person name="Shakespeare L.J."/>
            <person name="Joergensen M.G."/>
            <person name="Gerdes K."/>
        </authorList>
    </citation>
    <scope>RETRACTED PAPER</scope>
    <source>
        <strain>K12 / MG1655 / ATCC 47076</strain>
    </source>
</reference>
<reference key="10">
    <citation type="journal article" date="2018" name="Proc. Natl. Acad. Sci. U.S.A.">
        <authorList>
            <person name="Maisonneuve E."/>
            <person name="Shakespeare L.J."/>
            <person name="Joergensen M.G."/>
            <person name="Gerdes K."/>
        </authorList>
    </citation>
    <scope>RETRACTION NOTICE OF PUBMED:21788497</scope>
</reference>
<name>YAFO_ECOLI</name>
<proteinExistence type="evidence at protein level"/>
<gene>
    <name type="primary">yafO</name>
    <name type="ordered locus">b0233</name>
    <name type="ordered locus">JW0223</name>
</gene>
<keyword id="KW-0227">DNA damage</keyword>
<keyword id="KW-0234">DNA repair</keyword>
<keyword id="KW-0255">Endonuclease</keyword>
<keyword id="KW-0378">Hydrolase</keyword>
<keyword id="KW-0540">Nuclease</keyword>
<keyword id="KW-1185">Reference proteome</keyword>
<keyword id="KW-0694">RNA-binding</keyword>
<keyword id="KW-0742">SOS response</keyword>
<keyword id="KW-0346">Stress response</keyword>
<keyword id="KW-1277">Toxin-antitoxin system</keyword>
<organism>
    <name type="scientific">Escherichia coli (strain K12)</name>
    <dbReference type="NCBI Taxonomy" id="83333"/>
    <lineage>
        <taxon>Bacteria</taxon>
        <taxon>Pseudomonadati</taxon>
        <taxon>Pseudomonadota</taxon>
        <taxon>Gammaproteobacteria</taxon>
        <taxon>Enterobacterales</taxon>
        <taxon>Enterobacteriaceae</taxon>
        <taxon>Escherichia</taxon>
    </lineage>
</organism>
<feature type="chain" id="PRO_0000168539" description="mRNA interferase toxin YafO">
    <location>
        <begin position="1"/>
        <end position="132"/>
    </location>
</feature>
<protein>
    <recommendedName>
        <fullName>mRNA interferase toxin YafO</fullName>
        <ecNumber>3.1.-.-</ecNumber>
    </recommendedName>
    <alternativeName>
        <fullName>Endoribonuclease YafO</fullName>
    </alternativeName>
    <alternativeName>
        <fullName>Toxin YafO</fullName>
    </alternativeName>
</protein>